<accession>P29178</accession>
<reference key="1">
    <citation type="journal article" date="1990" name="Hepatology">
        <title>Molecular characterization of a new variant of hepatitis B virus in a persistently infected homosexual man.</title>
        <authorList>
            <person name="Bhat R.A."/>
            <person name="Ulrich P.P."/>
            <person name="Vyas G.N."/>
        </authorList>
    </citation>
    <scope>NUCLEOTIDE SEQUENCE [GENOMIC DNA]</scope>
</reference>
<name>CAPSD_HBVG1</name>
<sequence length="195" mass="22462">MDRTTLPYGLFGLDIDPYKEFGATVELLSFLPSDFFPSVRDLLDTASALYRESLESSDHCSPHHTALRQAILCWVELMTLATWVGNNLEDPASRDLVVNYVNTNMGLKIRQLLWFHISCLTFGRETVLEYLVSFGVWIRTPPAYRPPNAPILSTLPETTVVRRRGRSPRRRTPSPRRRRSPSPRRRRSQSRESQC</sequence>
<organismHost>
    <name type="scientific">Homo sapiens</name>
    <name type="common">Human</name>
    <dbReference type="NCBI Taxonomy" id="9606"/>
</organismHost>
<organismHost>
    <name type="scientific">Pan troglodytes</name>
    <name type="common">Chimpanzee</name>
    <dbReference type="NCBI Taxonomy" id="9598"/>
</organismHost>
<organism>
    <name type="scientific">Hepatitis B virus genotype G subtype adw2 (isolate United States/sf/1990)</name>
    <name type="common">HBV-G</name>
    <dbReference type="NCBI Taxonomy" id="31515"/>
    <lineage>
        <taxon>Viruses</taxon>
        <taxon>Riboviria</taxon>
        <taxon>Pararnavirae</taxon>
        <taxon>Artverviricota</taxon>
        <taxon>Revtraviricetes</taxon>
        <taxon>Blubervirales</taxon>
        <taxon>Hepadnaviridae</taxon>
        <taxon>Orthohepadnavirus</taxon>
        <taxon>Hepatitis B virus</taxon>
    </lineage>
</organism>
<proteinExistence type="inferred from homology"/>
<comment type="function">
    <text evidence="1">Self assembles to form an icosahedral capsid. Most capsids appear to be large particles with an icosahedral symmetry of T=4 and consist of 240 copies of capsid protein, though a fraction forms smaller T=3 particles consisting of 180 capsid proteins. Entering capsids are transported along microtubules to the nucleus. Phosphorylation of the capsid is thought to induce exposure of nuclear localization signal in the C-terminal portion of the capsid protein that allows binding to the nuclear pore complex via the importin (karyopherin-) alpha and beta. Capsids are imported in intact form through the nuclear pore into the nuclear basket, where it probably binds NUP153. Only capsids that contain the mature viral genome can release the viral DNA and capsid protein into the nucleoplasm. Immature capsids get stuck in the basket. Capsids encapsulate the pre-genomic RNA and the P protein. Pre-genomic RNA is reverse-transcribed into DNA while the capsid is still in the cytoplasm. The capsid can then either be directed to the nucleus, providing more genomes for transcription, or bud through the endoplasmic reticulum to provide new virions.</text>
</comment>
<comment type="subunit">
    <text evidence="1">Homodimerizes, then multimerizes. Interacts with cytosol exposed regions of viral L glycoprotein present in the reticulum-to-Golgi compartment. Interacts with human FLNB. Phosphorylated form interacts with host importin alpha; this interaction depends on the exposure of the NLS, which itself depends upon genome maturation and/or phosphorylation of the capsid protein. Interacts with host NUP153.</text>
</comment>
<comment type="subcellular location">
    <subcellularLocation>
        <location evidence="1">Virion</location>
    </subcellularLocation>
    <subcellularLocation>
        <location evidence="1">Host cytoplasm</location>
    </subcellularLocation>
</comment>
<comment type="PTM">
    <text evidence="1">Phosphorylated by host SRPK1, SRPK2, and maybe protein kinase C or GAPDH. Phosphorylation is critical for pregenomic RNA packaging. Protein kinase C phosphorylation is stimulated by HBx protein and may play a role in transport of the viral genome to the nucleus at the late step during the viral replication cycle.</text>
</comment>
<comment type="similarity">
    <text evidence="1">Belongs to the orthohepadnavirus core antigen family.</text>
</comment>
<evidence type="ECO:0000255" key="1">
    <source>
        <dbReference type="HAMAP-Rule" id="MF_04076"/>
    </source>
</evidence>
<evidence type="ECO:0000256" key="2">
    <source>
        <dbReference type="SAM" id="MobiDB-lite"/>
    </source>
</evidence>
<protein>
    <recommendedName>
        <fullName evidence="1">Capsid protein</fullName>
    </recommendedName>
    <alternativeName>
        <fullName evidence="1">Core antigen</fullName>
    </alternativeName>
    <alternativeName>
        <fullName evidence="1">Core protein</fullName>
    </alternativeName>
    <alternativeName>
        <fullName evidence="1">HBcAg</fullName>
    </alternativeName>
    <alternativeName>
        <fullName evidence="1">p21.5</fullName>
    </alternativeName>
</protein>
<dbReference type="PIR" id="A37182">
    <property type="entry name" value="NKVLH3"/>
</dbReference>
<dbReference type="SMR" id="P29178"/>
<dbReference type="GO" id="GO:0043657">
    <property type="term" value="C:host cell"/>
    <property type="evidence" value="ECO:0007669"/>
    <property type="project" value="GOC"/>
</dbReference>
<dbReference type="GO" id="GO:0030430">
    <property type="term" value="C:host cell cytoplasm"/>
    <property type="evidence" value="ECO:0007669"/>
    <property type="project" value="UniProtKB-SubCell"/>
</dbReference>
<dbReference type="GO" id="GO:0039619">
    <property type="term" value="C:T=4 icosahedral viral capsid"/>
    <property type="evidence" value="ECO:0007669"/>
    <property type="project" value="UniProtKB-UniRule"/>
</dbReference>
<dbReference type="GO" id="GO:0003677">
    <property type="term" value="F:DNA binding"/>
    <property type="evidence" value="ECO:0007669"/>
    <property type="project" value="UniProtKB-UniRule"/>
</dbReference>
<dbReference type="GO" id="GO:0003723">
    <property type="term" value="F:RNA binding"/>
    <property type="evidence" value="ECO:0007669"/>
    <property type="project" value="UniProtKB-UniRule"/>
</dbReference>
<dbReference type="GO" id="GO:0005198">
    <property type="term" value="F:structural molecule activity"/>
    <property type="evidence" value="ECO:0007669"/>
    <property type="project" value="UniProtKB-UniRule"/>
</dbReference>
<dbReference type="GO" id="GO:0075521">
    <property type="term" value="P:microtubule-dependent intracellular transport of viral material towards nucleus"/>
    <property type="evidence" value="ECO:0007669"/>
    <property type="project" value="UniProtKB-UniRule"/>
</dbReference>
<dbReference type="GO" id="GO:0046718">
    <property type="term" value="P:symbiont entry into host cell"/>
    <property type="evidence" value="ECO:0007669"/>
    <property type="project" value="UniProtKB-UniRule"/>
</dbReference>
<dbReference type="GO" id="GO:0075732">
    <property type="term" value="P:viral penetration into host nucleus"/>
    <property type="evidence" value="ECO:0007669"/>
    <property type="project" value="UniProtKB-UniRule"/>
</dbReference>
<dbReference type="FunFam" id="1.10.4090.10:FF:000001">
    <property type="entry name" value="Capsid protein"/>
    <property type="match status" value="1"/>
</dbReference>
<dbReference type="Gene3D" id="1.10.4090.10">
    <property type="entry name" value="Viral capsid, core domain supefamily, Hepatitis B virus"/>
    <property type="match status" value="1"/>
</dbReference>
<dbReference type="HAMAP" id="MF_04076">
    <property type="entry name" value="HBV_HBEAG"/>
    <property type="match status" value="1"/>
</dbReference>
<dbReference type="InterPro" id="IPR002006">
    <property type="entry name" value="Hepatitis_core"/>
</dbReference>
<dbReference type="InterPro" id="IPR036459">
    <property type="entry name" value="Viral_capsid_core_dom_sf_HBV"/>
</dbReference>
<dbReference type="Pfam" id="PF00906">
    <property type="entry name" value="Hepatitis_core"/>
    <property type="match status" value="3"/>
</dbReference>
<dbReference type="SUPFAM" id="SSF47852">
    <property type="entry name" value="Hepatitis B viral capsid (hbcag)"/>
    <property type="match status" value="1"/>
</dbReference>
<gene>
    <name evidence="1" type="primary">C</name>
</gene>
<keyword id="KW-0167">Capsid protein</keyword>
<keyword id="KW-1176">Cytoplasmic inwards viral transport</keyword>
<keyword id="KW-0238">DNA-binding</keyword>
<keyword id="KW-1035">Host cytoplasm</keyword>
<keyword id="KW-0945">Host-virus interaction</keyword>
<keyword id="KW-1177">Microtubular inwards viral transport</keyword>
<keyword id="KW-0597">Phosphoprotein</keyword>
<keyword id="KW-0677">Repeat</keyword>
<keyword id="KW-0694">RNA-binding</keyword>
<keyword id="KW-1144">T=4 icosahedral capsid protein</keyword>
<keyword id="KW-1163">Viral penetration into host nucleus</keyword>
<keyword id="KW-0946">Virion</keyword>
<keyword id="KW-1160">Virus entry into host cell</keyword>
<feature type="chain" id="PRO_0000222309" description="Capsid protein">
    <location>
        <begin position="1"/>
        <end position="195"/>
    </location>
</feature>
<feature type="repeat" description="1; half-length">
    <location>
        <begin position="167"/>
        <end position="172"/>
    </location>
</feature>
<feature type="repeat" description="2">
    <location>
        <begin position="174"/>
        <end position="180"/>
    </location>
</feature>
<feature type="repeat" description="3">
    <location>
        <begin position="182"/>
        <end position="188"/>
    </location>
</feature>
<feature type="region of interest" description="Disordered" evidence="2">
    <location>
        <begin position="148"/>
        <end position="195"/>
    </location>
</feature>
<feature type="region of interest" description="3 X 7 AA repeats of S-P-R-R-R-[PR]-S">
    <location>
        <begin position="167"/>
        <end position="188"/>
    </location>
</feature>
<feature type="region of interest" description="RNA binding" evidence="1">
    <location>
        <begin position="189"/>
        <end position="195"/>
    </location>
</feature>
<feature type="short sequence motif" description="Bipartite nuclear localization signal" evidence="1">
    <location>
        <begin position="170"/>
        <end position="187"/>
    </location>
</feature>
<feature type="compositionally biased region" description="Basic residues" evidence="2">
    <location>
        <begin position="161"/>
        <end position="188"/>
    </location>
</feature>
<feature type="modified residue" description="Phosphoserine; by host" evidence="1">
    <location>
        <position position="167"/>
    </location>
</feature>
<feature type="modified residue" description="Phosphoserine; by host" evidence="1">
    <location>
        <position position="174"/>
    </location>
</feature>
<feature type="modified residue" description="Phosphoserine; by host" evidence="1">
    <location>
        <position position="182"/>
    </location>
</feature>